<feature type="signal peptide" evidence="1">
    <location>
        <begin position="1"/>
        <end position="28"/>
    </location>
</feature>
<feature type="chain" id="PRO_1000200997" description="UPF0482 protein YnfB">
    <location>
        <begin position="29"/>
        <end position="113"/>
    </location>
</feature>
<dbReference type="EMBL" id="AP009240">
    <property type="protein sequence ID" value="BAG77228.1"/>
    <property type="molecule type" value="Genomic_DNA"/>
</dbReference>
<dbReference type="RefSeq" id="WP_000705211.1">
    <property type="nucleotide sequence ID" value="NC_011415.1"/>
</dbReference>
<dbReference type="KEGG" id="ecy:ECSE_1704"/>
<dbReference type="HOGENOM" id="CLU_167574_0_0_6"/>
<dbReference type="Proteomes" id="UP000008199">
    <property type="component" value="Chromosome"/>
</dbReference>
<dbReference type="HAMAP" id="MF_01581">
    <property type="entry name" value="UPF0482"/>
    <property type="match status" value="1"/>
</dbReference>
<dbReference type="InterPro" id="IPR009700">
    <property type="entry name" value="DUF1283"/>
</dbReference>
<dbReference type="NCBIfam" id="NF010180">
    <property type="entry name" value="PRK13659.1"/>
    <property type="match status" value="1"/>
</dbReference>
<dbReference type="Pfam" id="PF06932">
    <property type="entry name" value="DUF1283"/>
    <property type="match status" value="1"/>
</dbReference>
<protein>
    <recommendedName>
        <fullName evidence="1">UPF0482 protein YnfB</fullName>
    </recommendedName>
</protein>
<name>YNFB_ECOSE</name>
<accession>B6IB17</accession>
<reference key="1">
    <citation type="journal article" date="2008" name="DNA Res.">
        <title>Complete genome sequence and comparative analysis of the wild-type commensal Escherichia coli strain SE11 isolated from a healthy adult.</title>
        <authorList>
            <person name="Oshima K."/>
            <person name="Toh H."/>
            <person name="Ogura Y."/>
            <person name="Sasamoto H."/>
            <person name="Morita H."/>
            <person name="Park S.-H."/>
            <person name="Ooka T."/>
            <person name="Iyoda S."/>
            <person name="Taylor T.D."/>
            <person name="Hayashi T."/>
            <person name="Itoh K."/>
            <person name="Hattori M."/>
        </authorList>
    </citation>
    <scope>NUCLEOTIDE SEQUENCE [LARGE SCALE GENOMIC DNA]</scope>
    <source>
        <strain>SE11</strain>
    </source>
</reference>
<comment type="similarity">
    <text evidence="1">Belongs to the UPF0482 family.</text>
</comment>
<proteinExistence type="inferred from homology"/>
<gene>
    <name evidence="1" type="primary">ynfB</name>
    <name type="ordered locus">ECSE_1704</name>
</gene>
<organism>
    <name type="scientific">Escherichia coli (strain SE11)</name>
    <dbReference type="NCBI Taxonomy" id="409438"/>
    <lineage>
        <taxon>Bacteria</taxon>
        <taxon>Pseudomonadati</taxon>
        <taxon>Pseudomonadota</taxon>
        <taxon>Gammaproteobacteria</taxon>
        <taxon>Enterobacterales</taxon>
        <taxon>Enterobacteriaceae</taxon>
        <taxon>Escherichia</taxon>
    </lineage>
</organism>
<sequence>MKITLSKRIGLLAILLPCALALSTTVHAETNKLVIESGDSAQSRQHAAMEKEQWNDTRNLRQKVNKRTEKEWDKADAAFDNRDKCEQSANINAYWEPNTLRCLDRRTGRVITP</sequence>
<keyword id="KW-0732">Signal</keyword>
<evidence type="ECO:0000255" key="1">
    <source>
        <dbReference type="HAMAP-Rule" id="MF_01581"/>
    </source>
</evidence>